<dbReference type="EMBL" id="CP001291">
    <property type="protein sequence ID" value="ACK72087.1"/>
    <property type="molecule type" value="Genomic_DNA"/>
</dbReference>
<dbReference type="RefSeq" id="WP_015955680.1">
    <property type="nucleotide sequence ID" value="NC_011729.1"/>
</dbReference>
<dbReference type="SMR" id="B7KHZ0"/>
<dbReference type="STRING" id="65393.PCC7424_3706"/>
<dbReference type="KEGG" id="cyc:PCC7424_3706"/>
<dbReference type="eggNOG" id="COG0090">
    <property type="taxonomic scope" value="Bacteria"/>
</dbReference>
<dbReference type="HOGENOM" id="CLU_036235_2_1_3"/>
<dbReference type="OrthoDB" id="9778722at2"/>
<dbReference type="Proteomes" id="UP000002384">
    <property type="component" value="Chromosome"/>
</dbReference>
<dbReference type="GO" id="GO:0015934">
    <property type="term" value="C:large ribosomal subunit"/>
    <property type="evidence" value="ECO:0007669"/>
    <property type="project" value="InterPro"/>
</dbReference>
<dbReference type="GO" id="GO:0019843">
    <property type="term" value="F:rRNA binding"/>
    <property type="evidence" value="ECO:0007669"/>
    <property type="project" value="UniProtKB-UniRule"/>
</dbReference>
<dbReference type="GO" id="GO:0003735">
    <property type="term" value="F:structural constituent of ribosome"/>
    <property type="evidence" value="ECO:0007669"/>
    <property type="project" value="InterPro"/>
</dbReference>
<dbReference type="GO" id="GO:0016740">
    <property type="term" value="F:transferase activity"/>
    <property type="evidence" value="ECO:0007669"/>
    <property type="project" value="InterPro"/>
</dbReference>
<dbReference type="GO" id="GO:0006412">
    <property type="term" value="P:translation"/>
    <property type="evidence" value="ECO:0007669"/>
    <property type="project" value="UniProtKB-UniRule"/>
</dbReference>
<dbReference type="FunFam" id="2.30.30.30:FF:000001">
    <property type="entry name" value="50S ribosomal protein L2"/>
    <property type="match status" value="1"/>
</dbReference>
<dbReference type="FunFam" id="2.40.50.140:FF:000003">
    <property type="entry name" value="50S ribosomal protein L2"/>
    <property type="match status" value="1"/>
</dbReference>
<dbReference type="FunFam" id="4.10.950.10:FF:000001">
    <property type="entry name" value="50S ribosomal protein L2"/>
    <property type="match status" value="1"/>
</dbReference>
<dbReference type="Gene3D" id="2.30.30.30">
    <property type="match status" value="1"/>
</dbReference>
<dbReference type="Gene3D" id="2.40.50.140">
    <property type="entry name" value="Nucleic acid-binding proteins"/>
    <property type="match status" value="1"/>
</dbReference>
<dbReference type="Gene3D" id="4.10.950.10">
    <property type="entry name" value="Ribosomal protein L2, domain 3"/>
    <property type="match status" value="1"/>
</dbReference>
<dbReference type="HAMAP" id="MF_01320_B">
    <property type="entry name" value="Ribosomal_uL2_B"/>
    <property type="match status" value="1"/>
</dbReference>
<dbReference type="InterPro" id="IPR012340">
    <property type="entry name" value="NA-bd_OB-fold"/>
</dbReference>
<dbReference type="InterPro" id="IPR014722">
    <property type="entry name" value="Rib_uL2_dom2"/>
</dbReference>
<dbReference type="InterPro" id="IPR002171">
    <property type="entry name" value="Ribosomal_uL2"/>
</dbReference>
<dbReference type="InterPro" id="IPR005880">
    <property type="entry name" value="Ribosomal_uL2_bac/org-type"/>
</dbReference>
<dbReference type="InterPro" id="IPR022669">
    <property type="entry name" value="Ribosomal_uL2_C"/>
</dbReference>
<dbReference type="InterPro" id="IPR022671">
    <property type="entry name" value="Ribosomal_uL2_CS"/>
</dbReference>
<dbReference type="InterPro" id="IPR014726">
    <property type="entry name" value="Ribosomal_uL2_dom3"/>
</dbReference>
<dbReference type="InterPro" id="IPR022666">
    <property type="entry name" value="Ribosomal_uL2_RNA-bd_dom"/>
</dbReference>
<dbReference type="InterPro" id="IPR008991">
    <property type="entry name" value="Translation_prot_SH3-like_sf"/>
</dbReference>
<dbReference type="NCBIfam" id="TIGR01171">
    <property type="entry name" value="rplB_bact"/>
    <property type="match status" value="1"/>
</dbReference>
<dbReference type="PANTHER" id="PTHR13691:SF5">
    <property type="entry name" value="LARGE RIBOSOMAL SUBUNIT PROTEIN UL2M"/>
    <property type="match status" value="1"/>
</dbReference>
<dbReference type="PANTHER" id="PTHR13691">
    <property type="entry name" value="RIBOSOMAL PROTEIN L2"/>
    <property type="match status" value="1"/>
</dbReference>
<dbReference type="Pfam" id="PF00181">
    <property type="entry name" value="Ribosomal_L2"/>
    <property type="match status" value="1"/>
</dbReference>
<dbReference type="Pfam" id="PF03947">
    <property type="entry name" value="Ribosomal_L2_C"/>
    <property type="match status" value="1"/>
</dbReference>
<dbReference type="PIRSF" id="PIRSF002158">
    <property type="entry name" value="Ribosomal_L2"/>
    <property type="match status" value="1"/>
</dbReference>
<dbReference type="SMART" id="SM01383">
    <property type="entry name" value="Ribosomal_L2"/>
    <property type="match status" value="1"/>
</dbReference>
<dbReference type="SMART" id="SM01382">
    <property type="entry name" value="Ribosomal_L2_C"/>
    <property type="match status" value="1"/>
</dbReference>
<dbReference type="SUPFAM" id="SSF50249">
    <property type="entry name" value="Nucleic acid-binding proteins"/>
    <property type="match status" value="1"/>
</dbReference>
<dbReference type="SUPFAM" id="SSF50104">
    <property type="entry name" value="Translation proteins SH3-like domain"/>
    <property type="match status" value="1"/>
</dbReference>
<dbReference type="PROSITE" id="PS00467">
    <property type="entry name" value="RIBOSOMAL_L2"/>
    <property type="match status" value="1"/>
</dbReference>
<reference key="1">
    <citation type="journal article" date="2011" name="MBio">
        <title>Novel metabolic attributes of the genus Cyanothece, comprising a group of unicellular nitrogen-fixing Cyanobacteria.</title>
        <authorList>
            <person name="Bandyopadhyay A."/>
            <person name="Elvitigala T."/>
            <person name="Welsh E."/>
            <person name="Stockel J."/>
            <person name="Liberton M."/>
            <person name="Min H."/>
            <person name="Sherman L.A."/>
            <person name="Pakrasi H.B."/>
        </authorList>
    </citation>
    <scope>NUCLEOTIDE SEQUENCE [LARGE SCALE GENOMIC DNA]</scope>
    <source>
        <strain>PCC 7424</strain>
    </source>
</reference>
<feature type="chain" id="PRO_1000141534" description="Large ribosomal subunit protein uL2">
    <location>
        <begin position="1"/>
        <end position="277"/>
    </location>
</feature>
<feature type="region of interest" description="Disordered" evidence="2">
    <location>
        <begin position="1"/>
        <end position="20"/>
    </location>
</feature>
<feature type="region of interest" description="Disordered" evidence="2">
    <location>
        <begin position="27"/>
        <end position="55"/>
    </location>
</feature>
<feature type="region of interest" description="Disordered" evidence="2">
    <location>
        <begin position="207"/>
        <end position="277"/>
    </location>
</feature>
<feature type="compositionally biased region" description="Polar residues" evidence="2">
    <location>
        <begin position="27"/>
        <end position="48"/>
    </location>
</feature>
<feature type="compositionally biased region" description="Basic residues" evidence="2">
    <location>
        <begin position="207"/>
        <end position="220"/>
    </location>
</feature>
<feature type="compositionally biased region" description="Basic residues" evidence="2">
    <location>
        <begin position="259"/>
        <end position="277"/>
    </location>
</feature>
<sequence length="277" mass="30543">MGIRTFRPYTPGTRQASVSDFSEITKTQPEKSLTTYKHSSQGRNNRGVVTSRHRGGGHKRLYRIIDFRRDKHNIPAKVAAIEYDPNRNARIALLYYQDGEKRYILAPADLKVGSTVISGEDAPFEIGNALPLWRIPLGSEVHNIELVAGRGGQMVRAAGASAQVVAKEGNYVTLRLPSKEVRMVRKECYATIGKVGNADVRNLKLGKAGRSRHRGKRPHVRGSVMNPVDHPHGGGEGRAPIGRPGPVTPWGKPALGAKTRNRKKASSKLIIRRRNQS</sequence>
<accession>B7KHZ0</accession>
<comment type="function">
    <text evidence="1">One of the primary rRNA binding proteins. Required for association of the 30S and 50S subunits to form the 70S ribosome, for tRNA binding and peptide bond formation. It has been suggested to have peptidyltransferase activity; this is somewhat controversial. Makes several contacts with the 16S rRNA in the 70S ribosome.</text>
</comment>
<comment type="subunit">
    <text evidence="1">Part of the 50S ribosomal subunit. Forms a bridge to the 30S subunit in the 70S ribosome.</text>
</comment>
<comment type="similarity">
    <text evidence="1">Belongs to the universal ribosomal protein uL2 family.</text>
</comment>
<keyword id="KW-1185">Reference proteome</keyword>
<keyword id="KW-0687">Ribonucleoprotein</keyword>
<keyword id="KW-0689">Ribosomal protein</keyword>
<keyword id="KW-0694">RNA-binding</keyword>
<keyword id="KW-0699">rRNA-binding</keyword>
<name>RL2_GLOC7</name>
<gene>
    <name evidence="1" type="primary">rplB</name>
    <name evidence="1" type="synonym">rpl2</name>
    <name type="ordered locus">PCC7424_3706</name>
</gene>
<organism>
    <name type="scientific">Gloeothece citriformis (strain PCC 7424)</name>
    <name type="common">Cyanothece sp. (strain PCC 7424)</name>
    <dbReference type="NCBI Taxonomy" id="65393"/>
    <lineage>
        <taxon>Bacteria</taxon>
        <taxon>Bacillati</taxon>
        <taxon>Cyanobacteriota</taxon>
        <taxon>Cyanophyceae</taxon>
        <taxon>Oscillatoriophycideae</taxon>
        <taxon>Chroococcales</taxon>
        <taxon>Aphanothecaceae</taxon>
        <taxon>Gloeothece</taxon>
        <taxon>Gloeothece citriformis</taxon>
    </lineage>
</organism>
<proteinExistence type="inferred from homology"/>
<evidence type="ECO:0000255" key="1">
    <source>
        <dbReference type="HAMAP-Rule" id="MF_01320"/>
    </source>
</evidence>
<evidence type="ECO:0000256" key="2">
    <source>
        <dbReference type="SAM" id="MobiDB-lite"/>
    </source>
</evidence>
<evidence type="ECO:0000305" key="3"/>
<protein>
    <recommendedName>
        <fullName evidence="1">Large ribosomal subunit protein uL2</fullName>
    </recommendedName>
    <alternativeName>
        <fullName evidence="3">50S ribosomal protein L2</fullName>
    </alternativeName>
</protein>